<protein>
    <recommendedName>
        <fullName evidence="1">Lipoprotein signal peptidase</fullName>
        <ecNumber evidence="1">3.4.23.36</ecNumber>
    </recommendedName>
    <alternativeName>
        <fullName evidence="1">Prolipoprotein signal peptidase</fullName>
    </alternativeName>
    <alternativeName>
        <fullName evidence="1">Signal peptidase II</fullName>
        <shortName evidence="1">SPase II</shortName>
    </alternativeName>
</protein>
<accession>B8CWL9</accession>
<proteinExistence type="inferred from homology"/>
<comment type="function">
    <text evidence="1">This protein specifically catalyzes the removal of signal peptides from prolipoproteins.</text>
</comment>
<comment type="catalytic activity">
    <reaction evidence="1">
        <text>Release of signal peptides from bacterial membrane prolipoproteins. Hydrolyzes -Xaa-Yaa-Zaa-|-(S,diacylglyceryl)Cys-, in which Xaa is hydrophobic (preferably Leu), and Yaa (Ala or Ser) and Zaa (Gly or Ala) have small, neutral side chains.</text>
        <dbReference type="EC" id="3.4.23.36"/>
    </reaction>
</comment>
<comment type="pathway">
    <text evidence="1">Protein modification; lipoprotein biosynthesis (signal peptide cleavage).</text>
</comment>
<comment type="subcellular location">
    <subcellularLocation>
        <location evidence="1">Cell inner membrane</location>
        <topology evidence="1">Multi-pass membrane protein</topology>
    </subcellularLocation>
</comment>
<comment type="similarity">
    <text evidence="1">Belongs to the peptidase A8 family.</text>
</comment>
<evidence type="ECO:0000255" key="1">
    <source>
        <dbReference type="HAMAP-Rule" id="MF_00161"/>
    </source>
</evidence>
<feature type="chain" id="PRO_1000123498" description="Lipoprotein signal peptidase">
    <location>
        <begin position="1"/>
        <end position="145"/>
    </location>
</feature>
<feature type="transmembrane region" description="Helical" evidence="1">
    <location>
        <begin position="1"/>
        <end position="21"/>
    </location>
</feature>
<feature type="transmembrane region" description="Helical" evidence="1">
    <location>
        <begin position="57"/>
        <end position="77"/>
    </location>
</feature>
<feature type="transmembrane region" description="Helical" evidence="1">
    <location>
        <begin position="79"/>
        <end position="99"/>
    </location>
</feature>
<feature type="transmembrane region" description="Helical" evidence="1">
    <location>
        <begin position="115"/>
        <end position="135"/>
    </location>
</feature>
<feature type="active site" evidence="1">
    <location>
        <position position="109"/>
    </location>
</feature>
<feature type="active site" evidence="1">
    <location>
        <position position="123"/>
    </location>
</feature>
<gene>
    <name evidence="1" type="primary">lspA</name>
    <name type="ordered locus">Hore_09320</name>
</gene>
<name>LSPA_HALOH</name>
<dbReference type="EC" id="3.4.23.36" evidence="1"/>
<dbReference type="EMBL" id="CP001098">
    <property type="protein sequence ID" value="ACL69688.1"/>
    <property type="molecule type" value="Genomic_DNA"/>
</dbReference>
<dbReference type="RefSeq" id="WP_012635875.1">
    <property type="nucleotide sequence ID" value="NC_011899.1"/>
</dbReference>
<dbReference type="SMR" id="B8CWL9"/>
<dbReference type="STRING" id="373903.Hore_09320"/>
<dbReference type="KEGG" id="hor:Hore_09320"/>
<dbReference type="eggNOG" id="COG0597">
    <property type="taxonomic scope" value="Bacteria"/>
</dbReference>
<dbReference type="HOGENOM" id="CLU_083252_3_1_9"/>
<dbReference type="OrthoDB" id="9810259at2"/>
<dbReference type="UniPathway" id="UPA00665"/>
<dbReference type="Proteomes" id="UP000000719">
    <property type="component" value="Chromosome"/>
</dbReference>
<dbReference type="GO" id="GO:0005886">
    <property type="term" value="C:plasma membrane"/>
    <property type="evidence" value="ECO:0007669"/>
    <property type="project" value="UniProtKB-SubCell"/>
</dbReference>
<dbReference type="GO" id="GO:0004190">
    <property type="term" value="F:aspartic-type endopeptidase activity"/>
    <property type="evidence" value="ECO:0007669"/>
    <property type="project" value="UniProtKB-UniRule"/>
</dbReference>
<dbReference type="GO" id="GO:0006508">
    <property type="term" value="P:proteolysis"/>
    <property type="evidence" value="ECO:0007669"/>
    <property type="project" value="UniProtKB-KW"/>
</dbReference>
<dbReference type="HAMAP" id="MF_00161">
    <property type="entry name" value="LspA"/>
    <property type="match status" value="1"/>
</dbReference>
<dbReference type="InterPro" id="IPR001872">
    <property type="entry name" value="Peptidase_A8"/>
</dbReference>
<dbReference type="NCBIfam" id="TIGR00077">
    <property type="entry name" value="lspA"/>
    <property type="match status" value="1"/>
</dbReference>
<dbReference type="PANTHER" id="PTHR33695">
    <property type="entry name" value="LIPOPROTEIN SIGNAL PEPTIDASE"/>
    <property type="match status" value="1"/>
</dbReference>
<dbReference type="PANTHER" id="PTHR33695:SF1">
    <property type="entry name" value="LIPOPROTEIN SIGNAL PEPTIDASE"/>
    <property type="match status" value="1"/>
</dbReference>
<dbReference type="Pfam" id="PF01252">
    <property type="entry name" value="Peptidase_A8"/>
    <property type="match status" value="1"/>
</dbReference>
<dbReference type="PRINTS" id="PR00781">
    <property type="entry name" value="LIPOSIGPTASE"/>
</dbReference>
<dbReference type="PROSITE" id="PS00855">
    <property type="entry name" value="SPASE_II"/>
    <property type="match status" value="1"/>
</dbReference>
<organism>
    <name type="scientific">Halothermothrix orenii (strain H 168 / OCM 544 / DSM 9562)</name>
    <dbReference type="NCBI Taxonomy" id="373903"/>
    <lineage>
        <taxon>Bacteria</taxon>
        <taxon>Bacillati</taxon>
        <taxon>Bacillota</taxon>
        <taxon>Clostridia</taxon>
        <taxon>Halanaerobiales</taxon>
        <taxon>Halothermotrichaceae</taxon>
        <taxon>Halothermothrix</taxon>
    </lineage>
</organism>
<sequence length="145" mass="16393">MVYIVVLIVILLDQMVKLLVMEKMKVSESIPIIKDVFHLTYVQNRGAAFGILPGRRYLFIVITVVVISFLLIYYYKTRGSGMVTLSTGLIIGGALGNLIDRIRFGYVVDYLDFRIWPVFNLADSSVVIGAALLILYLWQQEKVGD</sequence>
<reference key="1">
    <citation type="journal article" date="2009" name="PLoS ONE">
        <title>Genome analysis of the anaerobic thermohalophilic bacterium Halothermothrix orenii.</title>
        <authorList>
            <person name="Mavromatis K."/>
            <person name="Ivanova N."/>
            <person name="Anderson I."/>
            <person name="Lykidis A."/>
            <person name="Hooper S.D."/>
            <person name="Sun H."/>
            <person name="Kunin V."/>
            <person name="Lapidus A."/>
            <person name="Hugenholtz P."/>
            <person name="Patel B."/>
            <person name="Kyrpides N.C."/>
        </authorList>
    </citation>
    <scope>NUCLEOTIDE SEQUENCE [LARGE SCALE GENOMIC DNA]</scope>
    <source>
        <strain>H 168 / OCM 544 / DSM 9562</strain>
    </source>
</reference>
<keyword id="KW-0064">Aspartyl protease</keyword>
<keyword id="KW-0997">Cell inner membrane</keyword>
<keyword id="KW-1003">Cell membrane</keyword>
<keyword id="KW-0378">Hydrolase</keyword>
<keyword id="KW-0472">Membrane</keyword>
<keyword id="KW-0645">Protease</keyword>
<keyword id="KW-1185">Reference proteome</keyword>
<keyword id="KW-0812">Transmembrane</keyword>
<keyword id="KW-1133">Transmembrane helix</keyword>